<protein>
    <recommendedName>
        <fullName>Bone morphogenetic protein 2</fullName>
        <shortName>BMP-2</shortName>
    </recommendedName>
    <alternativeName>
        <fullName>Bone morphogenetic protein 2A</fullName>
        <shortName>BMP-2A</shortName>
    </alternativeName>
</protein>
<proteinExistence type="evidence at protein level"/>
<gene>
    <name type="primary">Bmp2</name>
    <name type="synonym">Bmp-2</name>
</gene>
<evidence type="ECO:0000250" key="1"/>
<evidence type="ECO:0000250" key="2">
    <source>
        <dbReference type="UniProtKB" id="P12643"/>
    </source>
</evidence>
<evidence type="ECO:0000250" key="3">
    <source>
        <dbReference type="UniProtKB" id="P12644"/>
    </source>
</evidence>
<evidence type="ECO:0000255" key="4"/>
<evidence type="ECO:0000256" key="5">
    <source>
        <dbReference type="SAM" id="MobiDB-lite"/>
    </source>
</evidence>
<evidence type="ECO:0000269" key="6">
    <source>
    </source>
</evidence>
<evidence type="ECO:0000269" key="7">
    <source>
    </source>
</evidence>
<evidence type="ECO:0000269" key="8">
    <source>
    </source>
</evidence>
<evidence type="ECO:0000269" key="9">
    <source>
    </source>
</evidence>
<evidence type="ECO:0000269" key="10">
    <source>
    </source>
</evidence>
<evidence type="ECO:0000269" key="11">
    <source>
    </source>
</evidence>
<evidence type="ECO:0000269" key="12">
    <source>
    </source>
</evidence>
<evidence type="ECO:0000269" key="13">
    <source>
    </source>
</evidence>
<evidence type="ECO:0000269" key="14">
    <source>
    </source>
</evidence>
<evidence type="ECO:0000269" key="15">
    <source>
    </source>
</evidence>
<evidence type="ECO:0000269" key="16">
    <source>
    </source>
</evidence>
<evidence type="ECO:0000269" key="17">
    <source>
    </source>
</evidence>
<evidence type="ECO:0000305" key="18"/>
<dbReference type="EMBL" id="L25602">
    <property type="protein sequence ID" value="AAB05665.1"/>
    <property type="molecule type" value="Genomic_DNA"/>
</dbReference>
<dbReference type="EMBL" id="AK133923">
    <property type="protein sequence ID" value="BAE21928.1"/>
    <property type="molecule type" value="mRNA"/>
</dbReference>
<dbReference type="EMBL" id="AK161862">
    <property type="protein sequence ID" value="BAE36612.1"/>
    <property type="molecule type" value="mRNA"/>
</dbReference>
<dbReference type="EMBL" id="AL831753">
    <property type="status" value="NOT_ANNOTATED_CDS"/>
    <property type="molecule type" value="Genomic_DNA"/>
</dbReference>
<dbReference type="EMBL" id="CH466519">
    <property type="protein sequence ID" value="EDL28371.1"/>
    <property type="molecule type" value="Genomic_DNA"/>
</dbReference>
<dbReference type="EMBL" id="BC100344">
    <property type="protein sequence ID" value="AAI00345.1"/>
    <property type="molecule type" value="mRNA"/>
</dbReference>
<dbReference type="CCDS" id="CCDS16782.1"/>
<dbReference type="PIR" id="A34201">
    <property type="entry name" value="A34201"/>
</dbReference>
<dbReference type="PIR" id="S45355">
    <property type="entry name" value="S45355"/>
</dbReference>
<dbReference type="RefSeq" id="NP_031579.2">
    <property type="nucleotide sequence ID" value="NM_007553.3"/>
</dbReference>
<dbReference type="SMR" id="P21274"/>
<dbReference type="BioGRID" id="198363">
    <property type="interactions" value="1"/>
</dbReference>
<dbReference type="FunCoup" id="P21274">
    <property type="interactions" value="791"/>
</dbReference>
<dbReference type="STRING" id="10090.ENSMUSP00000028836"/>
<dbReference type="GlyCosmos" id="P21274">
    <property type="glycosylation" value="4 sites, No reported glycans"/>
</dbReference>
<dbReference type="GlyGen" id="P21274">
    <property type="glycosylation" value="5 sites, 3 N-linked glycans (3 sites)"/>
</dbReference>
<dbReference type="PhosphoSitePlus" id="P21274"/>
<dbReference type="PaxDb" id="10090-ENSMUSP00000028836"/>
<dbReference type="ProteomicsDB" id="265312"/>
<dbReference type="Antibodypedia" id="8441">
    <property type="antibodies" value="1018 antibodies from 43 providers"/>
</dbReference>
<dbReference type="DNASU" id="12156"/>
<dbReference type="Ensembl" id="ENSMUST00000028836.7">
    <property type="protein sequence ID" value="ENSMUSP00000028836.7"/>
    <property type="gene ID" value="ENSMUSG00000027358.7"/>
</dbReference>
<dbReference type="GeneID" id="12156"/>
<dbReference type="KEGG" id="mmu:12156"/>
<dbReference type="UCSC" id="uc008mnr.2">
    <property type="organism name" value="mouse"/>
</dbReference>
<dbReference type="AGR" id="MGI:88177"/>
<dbReference type="CTD" id="650"/>
<dbReference type="MGI" id="MGI:88177">
    <property type="gene designation" value="Bmp2"/>
</dbReference>
<dbReference type="VEuPathDB" id="HostDB:ENSMUSG00000027358"/>
<dbReference type="eggNOG" id="KOG3900">
    <property type="taxonomic scope" value="Eukaryota"/>
</dbReference>
<dbReference type="GeneTree" id="ENSGT00940000155666"/>
<dbReference type="HOGENOM" id="CLU_020515_4_2_1"/>
<dbReference type="InParanoid" id="P21274"/>
<dbReference type="OMA" id="VMRWIAH"/>
<dbReference type="OrthoDB" id="5987191at2759"/>
<dbReference type="PhylomeDB" id="P21274"/>
<dbReference type="TreeFam" id="TF351789"/>
<dbReference type="Reactome" id="R-MMU-201451">
    <property type="pathway name" value="Signaling by BMP"/>
</dbReference>
<dbReference type="Reactome" id="R-MMU-2129379">
    <property type="pathway name" value="Molecules associated with elastic fibres"/>
</dbReference>
<dbReference type="BioGRID-ORCS" id="12156">
    <property type="hits" value="2 hits in 79 CRISPR screens"/>
</dbReference>
<dbReference type="ChiTaRS" id="Bmp2">
    <property type="organism name" value="mouse"/>
</dbReference>
<dbReference type="PRO" id="PR:P21274"/>
<dbReference type="Proteomes" id="UP000000589">
    <property type="component" value="Chromosome 2"/>
</dbReference>
<dbReference type="RNAct" id="P21274">
    <property type="molecule type" value="protein"/>
</dbReference>
<dbReference type="Bgee" id="ENSMUSG00000027358">
    <property type="expression patterns" value="Expressed in gastrula and 312 other cell types or tissues"/>
</dbReference>
<dbReference type="GO" id="GO:0070724">
    <property type="term" value="C:BMP receptor complex"/>
    <property type="evidence" value="ECO:0007669"/>
    <property type="project" value="Ensembl"/>
</dbReference>
<dbReference type="GO" id="GO:0009986">
    <property type="term" value="C:cell surface"/>
    <property type="evidence" value="ECO:0007669"/>
    <property type="project" value="Ensembl"/>
</dbReference>
<dbReference type="GO" id="GO:0005929">
    <property type="term" value="C:cilium"/>
    <property type="evidence" value="ECO:0007669"/>
    <property type="project" value="Ensembl"/>
</dbReference>
<dbReference type="GO" id="GO:0150005">
    <property type="term" value="C:enzyme activator complex"/>
    <property type="evidence" value="ECO:0007669"/>
    <property type="project" value="Ensembl"/>
</dbReference>
<dbReference type="GO" id="GO:0005576">
    <property type="term" value="C:extracellular region"/>
    <property type="evidence" value="ECO:0000314"/>
    <property type="project" value="MGI"/>
</dbReference>
<dbReference type="GO" id="GO:0005615">
    <property type="term" value="C:extracellular space"/>
    <property type="evidence" value="ECO:0000314"/>
    <property type="project" value="MGI"/>
</dbReference>
<dbReference type="GO" id="GO:0043231">
    <property type="term" value="C:intracellular membrane-bounded organelle"/>
    <property type="evidence" value="ECO:0007669"/>
    <property type="project" value="Ensembl"/>
</dbReference>
<dbReference type="GO" id="GO:0005634">
    <property type="term" value="C:nucleus"/>
    <property type="evidence" value="ECO:0000314"/>
    <property type="project" value="MGI"/>
</dbReference>
<dbReference type="GO" id="GO:0005886">
    <property type="term" value="C:plasma membrane"/>
    <property type="evidence" value="ECO:0000314"/>
    <property type="project" value="MGI"/>
</dbReference>
<dbReference type="GO" id="GO:0070700">
    <property type="term" value="F:BMP receptor binding"/>
    <property type="evidence" value="ECO:0000266"/>
    <property type="project" value="MGI"/>
</dbReference>
<dbReference type="GO" id="GO:0039706">
    <property type="term" value="F:co-receptor binding"/>
    <property type="evidence" value="ECO:0007669"/>
    <property type="project" value="Ensembl"/>
</dbReference>
<dbReference type="GO" id="GO:0005125">
    <property type="term" value="F:cytokine activity"/>
    <property type="evidence" value="ECO:0000315"/>
    <property type="project" value="BHF-UCL"/>
</dbReference>
<dbReference type="GO" id="GO:0008083">
    <property type="term" value="F:growth factor activity"/>
    <property type="evidence" value="ECO:0007669"/>
    <property type="project" value="UniProtKB-KW"/>
</dbReference>
<dbReference type="GO" id="GO:0019211">
    <property type="term" value="F:phosphatase activator activity"/>
    <property type="evidence" value="ECO:0000266"/>
    <property type="project" value="MGI"/>
</dbReference>
<dbReference type="GO" id="GO:0043539">
    <property type="term" value="F:protein serine/threonine kinase activator activity"/>
    <property type="evidence" value="ECO:0000314"/>
    <property type="project" value="MGI"/>
</dbReference>
<dbReference type="GO" id="GO:0048018">
    <property type="term" value="F:receptor ligand activity"/>
    <property type="evidence" value="ECO:0000314"/>
    <property type="project" value="MGI"/>
</dbReference>
<dbReference type="GO" id="GO:0036305">
    <property type="term" value="P:ameloblast differentiation"/>
    <property type="evidence" value="ECO:0000314"/>
    <property type="project" value="MGI"/>
</dbReference>
<dbReference type="GO" id="GO:0009887">
    <property type="term" value="P:animal organ morphogenesis"/>
    <property type="evidence" value="ECO:0000315"/>
    <property type="project" value="MGI"/>
</dbReference>
<dbReference type="GO" id="GO:0003176">
    <property type="term" value="P:aortic valve development"/>
    <property type="evidence" value="ECO:0000315"/>
    <property type="project" value="BHF-UCL"/>
</dbReference>
<dbReference type="GO" id="GO:0048708">
    <property type="term" value="P:astrocyte differentiation"/>
    <property type="evidence" value="ECO:0000314"/>
    <property type="project" value="MGI"/>
</dbReference>
<dbReference type="GO" id="GO:1905222">
    <property type="term" value="P:atrioventricular canal morphogenesis"/>
    <property type="evidence" value="ECO:0000315"/>
    <property type="project" value="BHF-UCL"/>
</dbReference>
<dbReference type="GO" id="GO:0003181">
    <property type="term" value="P:atrioventricular valve morphogenesis"/>
    <property type="evidence" value="ECO:0000315"/>
    <property type="project" value="MGI"/>
</dbReference>
<dbReference type="GO" id="GO:0030509">
    <property type="term" value="P:BMP signaling pathway"/>
    <property type="evidence" value="ECO:0000314"/>
    <property type="project" value="BHF-UCL"/>
</dbReference>
<dbReference type="GO" id="GO:0060348">
    <property type="term" value="P:bone development"/>
    <property type="evidence" value="ECO:0000315"/>
    <property type="project" value="MGI"/>
</dbReference>
<dbReference type="GO" id="GO:0030282">
    <property type="term" value="P:bone mineralization"/>
    <property type="evidence" value="ECO:0000314"/>
    <property type="project" value="MGI"/>
</dbReference>
<dbReference type="GO" id="GO:0001658">
    <property type="term" value="P:branching involved in ureteric bud morphogenesis"/>
    <property type="evidence" value="ECO:0000316"/>
    <property type="project" value="MGI"/>
</dbReference>
<dbReference type="GO" id="GO:0003210">
    <property type="term" value="P:cardiac atrium formation"/>
    <property type="evidence" value="ECO:0000315"/>
    <property type="project" value="BHF-UCL"/>
</dbReference>
<dbReference type="GO" id="GO:0060317">
    <property type="term" value="P:cardiac epithelial to mesenchymal transition"/>
    <property type="evidence" value="ECO:0007669"/>
    <property type="project" value="Ensembl"/>
</dbReference>
<dbReference type="GO" id="GO:1905072">
    <property type="term" value="P:cardiac jelly development"/>
    <property type="evidence" value="ECO:0000315"/>
    <property type="project" value="BHF-UCL"/>
</dbReference>
<dbReference type="GO" id="GO:0055007">
    <property type="term" value="P:cardiac muscle cell differentiation"/>
    <property type="evidence" value="ECO:0000316"/>
    <property type="project" value="BHF-UCL"/>
</dbReference>
<dbReference type="GO" id="GO:0055008">
    <property type="term" value="P:cardiac muscle tissue morphogenesis"/>
    <property type="evidence" value="ECO:0000315"/>
    <property type="project" value="MGI"/>
</dbReference>
<dbReference type="GO" id="GO:0035051">
    <property type="term" value="P:cardiocyte differentiation"/>
    <property type="evidence" value="ECO:0000266"/>
    <property type="project" value="MGI"/>
</dbReference>
<dbReference type="GO" id="GO:0045165">
    <property type="term" value="P:cell fate commitment"/>
    <property type="evidence" value="ECO:0000315"/>
    <property type="project" value="MGI"/>
</dbReference>
<dbReference type="GO" id="GO:0071363">
    <property type="term" value="P:cellular response to growth factor stimulus"/>
    <property type="evidence" value="ECO:0000314"/>
    <property type="project" value="MGI"/>
</dbReference>
<dbReference type="GO" id="GO:0002062">
    <property type="term" value="P:chondrocyte differentiation"/>
    <property type="evidence" value="ECO:0007669"/>
    <property type="project" value="Ensembl"/>
</dbReference>
<dbReference type="GO" id="GO:0060128">
    <property type="term" value="P:corticotropin hormone secreting cell differentiation"/>
    <property type="evidence" value="ECO:0000314"/>
    <property type="project" value="MGI"/>
</dbReference>
<dbReference type="GO" id="GO:0035054">
    <property type="term" value="P:embryonic heart tube anterior/posterior pattern specification"/>
    <property type="evidence" value="ECO:0000315"/>
    <property type="project" value="MGI"/>
</dbReference>
<dbReference type="GO" id="GO:0003272">
    <property type="term" value="P:endocardial cushion formation"/>
    <property type="evidence" value="ECO:0000315"/>
    <property type="project" value="BHF-UCL"/>
</dbReference>
<dbReference type="GO" id="GO:0003203">
    <property type="term" value="P:endocardial cushion morphogenesis"/>
    <property type="evidence" value="ECO:0000315"/>
    <property type="project" value="BHF-UCL"/>
</dbReference>
<dbReference type="GO" id="GO:0003133">
    <property type="term" value="P:endodermal-mesodermal cell signaling"/>
    <property type="evidence" value="ECO:0007669"/>
    <property type="project" value="Ensembl"/>
</dbReference>
<dbReference type="GO" id="GO:0001837">
    <property type="term" value="P:epithelial to mesenchymal transition"/>
    <property type="evidence" value="ECO:0000315"/>
    <property type="project" value="BHF-UCL"/>
</dbReference>
<dbReference type="GO" id="GO:0010467">
    <property type="term" value="P:gene expression"/>
    <property type="evidence" value="ECO:0000314"/>
    <property type="project" value="MGI"/>
</dbReference>
<dbReference type="GO" id="GO:0007507">
    <property type="term" value="P:heart development"/>
    <property type="evidence" value="ECO:0000315"/>
    <property type="project" value="MGI"/>
</dbReference>
<dbReference type="GO" id="GO:0003129">
    <property type="term" value="P:heart induction"/>
    <property type="evidence" value="ECO:0007669"/>
    <property type="project" value="Ensembl"/>
</dbReference>
<dbReference type="GO" id="GO:0001701">
    <property type="term" value="P:in utero embryonic development"/>
    <property type="evidence" value="ECO:0000315"/>
    <property type="project" value="MGI"/>
</dbReference>
<dbReference type="GO" id="GO:0006954">
    <property type="term" value="P:inflammatory response"/>
    <property type="evidence" value="ECO:0000270"/>
    <property type="project" value="UniProtKB"/>
</dbReference>
<dbReference type="GO" id="GO:0048839">
    <property type="term" value="P:inner ear development"/>
    <property type="evidence" value="ECO:0000314"/>
    <property type="project" value="MGI"/>
</dbReference>
<dbReference type="GO" id="GO:0060426">
    <property type="term" value="P:lung vasculature development"/>
    <property type="evidence" value="ECO:0007669"/>
    <property type="project" value="Ensembl"/>
</dbReference>
<dbReference type="GO" id="GO:0048762">
    <property type="term" value="P:mesenchymal cell differentiation"/>
    <property type="evidence" value="ECO:0000250"/>
    <property type="project" value="UniProtKB"/>
</dbReference>
<dbReference type="GO" id="GO:0072138">
    <property type="term" value="P:mesenchymal cell proliferation involved in ureteric bud development"/>
    <property type="evidence" value="ECO:0000315"/>
    <property type="project" value="UniProtKB"/>
</dbReference>
<dbReference type="GO" id="GO:0060485">
    <property type="term" value="P:mesenchyme development"/>
    <property type="evidence" value="ECO:0000250"/>
    <property type="project" value="BHF-UCL"/>
</dbReference>
<dbReference type="GO" id="GO:0032348">
    <property type="term" value="P:negative regulation of aldosterone biosynthetic process"/>
    <property type="evidence" value="ECO:0007669"/>
    <property type="project" value="Ensembl"/>
</dbReference>
<dbReference type="GO" id="GO:0051042">
    <property type="term" value="P:negative regulation of calcium-independent cell-cell adhesion"/>
    <property type="evidence" value="ECO:0007669"/>
    <property type="project" value="Ensembl"/>
</dbReference>
<dbReference type="GO" id="GO:0090090">
    <property type="term" value="P:negative regulation of canonical Wnt signaling pathway"/>
    <property type="evidence" value="ECO:0007669"/>
    <property type="project" value="Ensembl"/>
</dbReference>
<dbReference type="GO" id="GO:2000726">
    <property type="term" value="P:negative regulation of cardiac muscle cell differentiation"/>
    <property type="evidence" value="ECO:0007669"/>
    <property type="project" value="Ensembl"/>
</dbReference>
<dbReference type="GO" id="GO:0045786">
    <property type="term" value="P:negative regulation of cell cycle"/>
    <property type="evidence" value="ECO:0007669"/>
    <property type="project" value="Ensembl"/>
</dbReference>
<dbReference type="GO" id="GO:0008285">
    <property type="term" value="P:negative regulation of cell population proliferation"/>
    <property type="evidence" value="ECO:0000316"/>
    <property type="project" value="MGI"/>
</dbReference>
<dbReference type="GO" id="GO:2000065">
    <property type="term" value="P:negative regulation of cortisol biosynthetic process"/>
    <property type="evidence" value="ECO:0007669"/>
    <property type="project" value="Ensembl"/>
</dbReference>
<dbReference type="GO" id="GO:0045599">
    <property type="term" value="P:negative regulation of fat cell differentiation"/>
    <property type="evidence" value="ECO:0007669"/>
    <property type="project" value="Ensembl"/>
</dbReference>
<dbReference type="GO" id="GO:0010629">
    <property type="term" value="P:negative regulation of gene expression"/>
    <property type="evidence" value="ECO:0000314"/>
    <property type="project" value="MGI"/>
</dbReference>
<dbReference type="GO" id="GO:0043569">
    <property type="term" value="P:negative regulation of insulin-like growth factor receptor signaling pathway"/>
    <property type="evidence" value="ECO:0007669"/>
    <property type="project" value="Ensembl"/>
</dbReference>
<dbReference type="GO" id="GO:0051148">
    <property type="term" value="P:negative regulation of muscle cell differentiation"/>
    <property type="evidence" value="ECO:0000314"/>
    <property type="project" value="MGI"/>
</dbReference>
<dbReference type="GO" id="GO:0048662">
    <property type="term" value="P:negative regulation of smooth muscle cell proliferation"/>
    <property type="evidence" value="ECO:0000316"/>
    <property type="project" value="BHF-UCL"/>
</dbReference>
<dbReference type="GO" id="GO:0000122">
    <property type="term" value="P:negative regulation of transcription by RNA polymerase II"/>
    <property type="evidence" value="ECO:0000314"/>
    <property type="project" value="MGI"/>
</dbReference>
<dbReference type="GO" id="GO:0030512">
    <property type="term" value="P:negative regulation of transforming growth factor beta receptor signaling pathway"/>
    <property type="evidence" value="ECO:0007669"/>
    <property type="project" value="Ensembl"/>
</dbReference>
<dbReference type="GO" id="GO:0007219">
    <property type="term" value="P:Notch signaling pathway"/>
    <property type="evidence" value="ECO:0000315"/>
    <property type="project" value="MGI"/>
</dbReference>
<dbReference type="GO" id="GO:0042475">
    <property type="term" value="P:odontogenesis of dentin-containing tooth"/>
    <property type="evidence" value="ECO:0000314"/>
    <property type="project" value="MGI"/>
</dbReference>
<dbReference type="GO" id="GO:0001649">
    <property type="term" value="P:osteoblast differentiation"/>
    <property type="evidence" value="ECO:0000314"/>
    <property type="project" value="MGI"/>
</dbReference>
<dbReference type="GO" id="GO:0030316">
    <property type="term" value="P:osteoclast differentiation"/>
    <property type="evidence" value="ECO:0007669"/>
    <property type="project" value="Ensembl"/>
</dbReference>
<dbReference type="GO" id="GO:0060039">
    <property type="term" value="P:pericardium development"/>
    <property type="evidence" value="ECO:0000315"/>
    <property type="project" value="MGI"/>
</dbReference>
<dbReference type="GO" id="GO:0043065">
    <property type="term" value="P:positive regulation of apoptotic process"/>
    <property type="evidence" value="ECO:0000266"/>
    <property type="project" value="MGI"/>
</dbReference>
<dbReference type="GO" id="GO:0048711">
    <property type="term" value="P:positive regulation of astrocyte differentiation"/>
    <property type="evidence" value="ECO:0000314"/>
    <property type="project" value="MGI"/>
</dbReference>
<dbReference type="GO" id="GO:0030501">
    <property type="term" value="P:positive regulation of bone mineralization"/>
    <property type="evidence" value="ECO:0000314"/>
    <property type="project" value="BHF-UCL"/>
</dbReference>
<dbReference type="GO" id="GO:1900159">
    <property type="term" value="P:positive regulation of bone mineralization involved in bone maturation"/>
    <property type="evidence" value="ECO:0007669"/>
    <property type="project" value="Ensembl"/>
</dbReference>
<dbReference type="GO" id="GO:0061036">
    <property type="term" value="P:positive regulation of cartilage development"/>
    <property type="evidence" value="ECO:0000314"/>
    <property type="project" value="MGI"/>
</dbReference>
<dbReference type="GO" id="GO:0030335">
    <property type="term" value="P:positive regulation of cell migration"/>
    <property type="evidence" value="ECO:0000315"/>
    <property type="project" value="BHF-UCL"/>
</dbReference>
<dbReference type="GO" id="GO:0030858">
    <property type="term" value="P:positive regulation of epithelial cell differentiation"/>
    <property type="evidence" value="ECO:0000314"/>
    <property type="project" value="MGI"/>
</dbReference>
<dbReference type="GO" id="GO:0010718">
    <property type="term" value="P:positive regulation of epithelial to mesenchymal transition"/>
    <property type="evidence" value="ECO:0000315"/>
    <property type="project" value="MGI"/>
</dbReference>
<dbReference type="GO" id="GO:0070374">
    <property type="term" value="P:positive regulation of ERK1 and ERK2 cascade"/>
    <property type="evidence" value="ECO:0000250"/>
    <property type="project" value="BHF-UCL"/>
</dbReference>
<dbReference type="GO" id="GO:0003331">
    <property type="term" value="P:positive regulation of extracellular matrix constituent secretion"/>
    <property type="evidence" value="ECO:0000315"/>
    <property type="project" value="BHF-UCL"/>
</dbReference>
<dbReference type="GO" id="GO:0045600">
    <property type="term" value="P:positive regulation of fat cell differentiation"/>
    <property type="evidence" value="ECO:0000314"/>
    <property type="project" value="MGI"/>
</dbReference>
<dbReference type="GO" id="GO:0010628">
    <property type="term" value="P:positive regulation of gene expression"/>
    <property type="evidence" value="ECO:0000314"/>
    <property type="project" value="BHF-UCL"/>
</dbReference>
<dbReference type="GO" id="GO:1902895">
    <property type="term" value="P:positive regulation of miRNA transcription"/>
    <property type="evidence" value="ECO:0000316"/>
    <property type="project" value="BHF-UCL"/>
</dbReference>
<dbReference type="GO" id="GO:0050769">
    <property type="term" value="P:positive regulation of neurogenesis"/>
    <property type="evidence" value="ECO:0000266"/>
    <property type="project" value="MGI"/>
</dbReference>
<dbReference type="GO" id="GO:0045666">
    <property type="term" value="P:positive regulation of neuron differentiation"/>
    <property type="evidence" value="ECO:0000314"/>
    <property type="project" value="MGI"/>
</dbReference>
<dbReference type="GO" id="GO:1901331">
    <property type="term" value="P:positive regulation of odontoblast differentiation"/>
    <property type="evidence" value="ECO:0000315"/>
    <property type="project" value="UniProtKB"/>
</dbReference>
<dbReference type="GO" id="GO:0042482">
    <property type="term" value="P:positive regulation of odontogenesis"/>
    <property type="evidence" value="ECO:0000314"/>
    <property type="project" value="MGI"/>
</dbReference>
<dbReference type="GO" id="GO:0045778">
    <property type="term" value="P:positive regulation of ossification"/>
    <property type="evidence" value="ECO:0000314"/>
    <property type="project" value="MGI"/>
</dbReference>
<dbReference type="GO" id="GO:0045669">
    <property type="term" value="P:positive regulation of osteoblast differentiation"/>
    <property type="evidence" value="ECO:0000314"/>
    <property type="project" value="MGI"/>
</dbReference>
<dbReference type="GO" id="GO:0033690">
    <property type="term" value="P:positive regulation of osteoblast proliferation"/>
    <property type="evidence" value="ECO:0000315"/>
    <property type="project" value="BHF-UCL"/>
</dbReference>
<dbReference type="GO" id="GO:1900745">
    <property type="term" value="P:positive regulation of p38MAPK cascade"/>
    <property type="evidence" value="ECO:0007669"/>
    <property type="project" value="Ensembl"/>
</dbReference>
<dbReference type="GO" id="GO:0035360">
    <property type="term" value="P:positive regulation of peroxisome proliferator activated receptor signaling pathway"/>
    <property type="evidence" value="ECO:0007669"/>
    <property type="project" value="Ensembl"/>
</dbReference>
<dbReference type="GO" id="GO:0060391">
    <property type="term" value="P:positive regulation of SMAD protein signal transduction"/>
    <property type="evidence" value="ECO:0000314"/>
    <property type="project" value="BHF-UCL"/>
</dbReference>
<dbReference type="GO" id="GO:0045944">
    <property type="term" value="P:positive regulation of transcription by RNA polymerase II"/>
    <property type="evidence" value="ECO:0000314"/>
    <property type="project" value="MGI"/>
</dbReference>
<dbReference type="GO" id="GO:0030177">
    <property type="term" value="P:positive regulation of Wnt signaling pathway"/>
    <property type="evidence" value="ECO:0000314"/>
    <property type="project" value="MGI"/>
</dbReference>
<dbReference type="GO" id="GO:0031648">
    <property type="term" value="P:protein destabilization"/>
    <property type="evidence" value="ECO:0000314"/>
    <property type="project" value="MGI"/>
</dbReference>
<dbReference type="GO" id="GO:0006029">
    <property type="term" value="P:proteoglycan metabolic process"/>
    <property type="evidence" value="ECO:0000316"/>
    <property type="project" value="MGI"/>
</dbReference>
<dbReference type="GO" id="GO:0042487">
    <property type="term" value="P:regulation of odontogenesis of dentin-containing tooth"/>
    <property type="evidence" value="ECO:0000316"/>
    <property type="project" value="MGI"/>
</dbReference>
<dbReference type="GO" id="GO:0009617">
    <property type="term" value="P:response to bacterium"/>
    <property type="evidence" value="ECO:0000270"/>
    <property type="project" value="MGI"/>
</dbReference>
<dbReference type="GO" id="GO:0001666">
    <property type="term" value="P:response to hypoxia"/>
    <property type="evidence" value="ECO:0000315"/>
    <property type="project" value="MGI"/>
</dbReference>
<dbReference type="GO" id="GO:0021537">
    <property type="term" value="P:telencephalon development"/>
    <property type="evidence" value="ECO:0000266"/>
    <property type="project" value="MGI"/>
</dbReference>
<dbReference type="GO" id="GO:0021978">
    <property type="term" value="P:telencephalon regionalization"/>
    <property type="evidence" value="ECO:0000316"/>
    <property type="project" value="MGI"/>
</dbReference>
<dbReference type="GO" id="GO:0060129">
    <property type="term" value="P:thyroid-stimulating hormone-secreting cell differentiation"/>
    <property type="evidence" value="ECO:0000314"/>
    <property type="project" value="MGI"/>
</dbReference>
<dbReference type="GO" id="GO:0006366">
    <property type="term" value="P:transcription by RNA polymerase II"/>
    <property type="evidence" value="ECO:0000314"/>
    <property type="project" value="MGI"/>
</dbReference>
<dbReference type="GO" id="GO:0007179">
    <property type="term" value="P:transforming growth factor beta receptor signaling pathway"/>
    <property type="evidence" value="ECO:0000304"/>
    <property type="project" value="MGI"/>
</dbReference>
<dbReference type="CDD" id="cd19390">
    <property type="entry name" value="TGF_beta_BMP2"/>
    <property type="match status" value="1"/>
</dbReference>
<dbReference type="FunFam" id="2.10.90.10:FF:000103">
    <property type="entry name" value="Bone morphogenetic protein 16"/>
    <property type="match status" value="1"/>
</dbReference>
<dbReference type="FunFam" id="2.60.120.970:FF:000009">
    <property type="entry name" value="bone morphogenetic protein 2"/>
    <property type="match status" value="1"/>
</dbReference>
<dbReference type="Gene3D" id="2.60.120.970">
    <property type="match status" value="1"/>
</dbReference>
<dbReference type="Gene3D" id="2.10.90.10">
    <property type="entry name" value="Cystine-knot cytokines"/>
    <property type="match status" value="1"/>
</dbReference>
<dbReference type="InterPro" id="IPR047953">
    <property type="entry name" value="BMP2_TGF_beta-like"/>
</dbReference>
<dbReference type="InterPro" id="IPR029034">
    <property type="entry name" value="Cystine-knot_cytokine"/>
</dbReference>
<dbReference type="InterPro" id="IPR001839">
    <property type="entry name" value="TGF-b_C"/>
</dbReference>
<dbReference type="InterPro" id="IPR001111">
    <property type="entry name" value="TGF-b_propeptide"/>
</dbReference>
<dbReference type="InterPro" id="IPR015615">
    <property type="entry name" value="TGF-beta-rel"/>
</dbReference>
<dbReference type="InterPro" id="IPR017948">
    <property type="entry name" value="TGFb_CS"/>
</dbReference>
<dbReference type="PANTHER" id="PTHR11848:SF143">
    <property type="entry name" value="BONE MORPHOGENETIC PROTEIN 2"/>
    <property type="match status" value="1"/>
</dbReference>
<dbReference type="PANTHER" id="PTHR11848">
    <property type="entry name" value="TGF-BETA FAMILY"/>
    <property type="match status" value="1"/>
</dbReference>
<dbReference type="Pfam" id="PF00019">
    <property type="entry name" value="TGF_beta"/>
    <property type="match status" value="1"/>
</dbReference>
<dbReference type="Pfam" id="PF00688">
    <property type="entry name" value="TGFb_propeptide"/>
    <property type="match status" value="1"/>
</dbReference>
<dbReference type="SMART" id="SM00204">
    <property type="entry name" value="TGFB"/>
    <property type="match status" value="1"/>
</dbReference>
<dbReference type="SUPFAM" id="SSF57501">
    <property type="entry name" value="Cystine-knot cytokines"/>
    <property type="match status" value="1"/>
</dbReference>
<dbReference type="PROSITE" id="PS00250">
    <property type="entry name" value="TGF_BETA_1"/>
    <property type="match status" value="1"/>
</dbReference>
<dbReference type="PROSITE" id="PS51362">
    <property type="entry name" value="TGF_BETA_2"/>
    <property type="match status" value="1"/>
</dbReference>
<name>BMP2_MOUSE</name>
<accession>P21274</accession>
<accession>Q497W8</accession>
<keyword id="KW-0891">Chondrogenesis</keyword>
<keyword id="KW-0165">Cleavage on pair of basic residues</keyword>
<keyword id="KW-0202">Cytokine</keyword>
<keyword id="KW-0217">Developmental protein</keyword>
<keyword id="KW-0221">Differentiation</keyword>
<keyword id="KW-1015">Disulfide bond</keyword>
<keyword id="KW-0325">Glycoprotein</keyword>
<keyword id="KW-0339">Growth factor</keyword>
<keyword id="KW-0892">Osteogenesis</keyword>
<keyword id="KW-0597">Phosphoprotein</keyword>
<keyword id="KW-1185">Reference proteome</keyword>
<keyword id="KW-0964">Secreted</keyword>
<keyword id="KW-0732">Signal</keyword>
<organism>
    <name type="scientific">Mus musculus</name>
    <name type="common">Mouse</name>
    <dbReference type="NCBI Taxonomy" id="10090"/>
    <lineage>
        <taxon>Eukaryota</taxon>
        <taxon>Metazoa</taxon>
        <taxon>Chordata</taxon>
        <taxon>Craniata</taxon>
        <taxon>Vertebrata</taxon>
        <taxon>Euteleostomi</taxon>
        <taxon>Mammalia</taxon>
        <taxon>Eutheria</taxon>
        <taxon>Euarchontoglires</taxon>
        <taxon>Glires</taxon>
        <taxon>Rodentia</taxon>
        <taxon>Myomorpha</taxon>
        <taxon>Muroidea</taxon>
        <taxon>Muridae</taxon>
        <taxon>Murinae</taxon>
        <taxon>Mus</taxon>
        <taxon>Mus</taxon>
    </lineage>
</organism>
<feature type="signal peptide" evidence="4">
    <location>
        <begin position="1"/>
        <end position="19"/>
    </location>
</feature>
<feature type="propeptide" id="PRO_0000033826" description="Cleaved by PCSK5" evidence="18">
    <location>
        <begin position="20"/>
        <end position="280"/>
    </location>
</feature>
<feature type="chain" id="PRO_0000033827" description="Bone morphogenetic protein 2">
    <location>
        <begin position="281"/>
        <end position="394"/>
    </location>
</feature>
<feature type="region of interest" description="Disordered" evidence="5">
    <location>
        <begin position="269"/>
        <end position="291"/>
    </location>
</feature>
<feature type="compositionally biased region" description="Basic residues" evidence="5">
    <location>
        <begin position="272"/>
        <end position="291"/>
    </location>
</feature>
<feature type="modified residue" description="Phosphoserine" evidence="3">
    <location>
        <position position="86"/>
    </location>
</feature>
<feature type="glycosylation site" description="N-linked (GlcNAc...) asparagine" evidence="4">
    <location>
        <position position="134"/>
    </location>
</feature>
<feature type="glycosylation site" description="N-linked (GlcNAc...) asparagine" evidence="4">
    <location>
        <position position="162"/>
    </location>
</feature>
<feature type="glycosylation site" description="N-linked (GlcNAc...) asparagine" evidence="4">
    <location>
        <position position="198"/>
    </location>
</feature>
<feature type="glycosylation site" description="N-linked (GlcNAc...) asparagine" evidence="4">
    <location>
        <position position="336"/>
    </location>
</feature>
<feature type="disulfide bond" evidence="1">
    <location>
        <begin position="294"/>
        <end position="359"/>
    </location>
</feature>
<feature type="disulfide bond" evidence="1">
    <location>
        <begin position="323"/>
        <end position="391"/>
    </location>
</feature>
<feature type="disulfide bond" evidence="1">
    <location>
        <begin position="327"/>
        <end position="393"/>
    </location>
</feature>
<feature type="disulfide bond" description="Interchain" evidence="1">
    <location>
        <position position="358"/>
    </location>
</feature>
<feature type="sequence conflict" description="In Ref. 1; AAB05665." evidence="18" ref="1">
    <original>S</original>
    <variation>T</variation>
    <location>
        <position position="110"/>
    </location>
</feature>
<feature type="sequence conflict" description="In Ref. 1; AAB05665." evidence="18" ref="1">
    <original>HE</original>
    <variation>QL</variation>
    <location>
        <begin position="113"/>
        <end position="114"/>
    </location>
</feature>
<feature type="sequence conflict" description="In Ref. 6; no nucleotide entry." evidence="18" ref="6">
    <original>G</original>
    <variation>R</variation>
    <location>
        <position position="271"/>
    </location>
</feature>
<sequence>MVAGTRCLLVLLLPQVLLGGAAGLIPELGRKKFAAASSRPLSRPSEDVLSEFELRLLSMFGLKQRPTPSKDVVVPPYMLDLYRRHSGQPGAPAPDHRLERAASRANTVRSFHHEEAVEELPEMSGKTARRFFFNLSSVPSDEFLTSAELQIFREQIQEALGNSSFQHRINIYEIIKPAAANLKFPVTRLLDTRLVNQNTSQWESFDVTPAVMRWTTQGHTNHGFVVEVAHLEENPGVSKRHVRISRSLHQDEHSWSQIRPLLVTFGHDGKGHPLHKREKRQAKHKQRKRLKSSCKRHPLYVDFSDVGWNDWIVAPPGYHAFYCHGECPFPLADHLNSTNHAIVQTLVNSVNSKIPKACCVPTELSAISMLYLDENEKVVLKNYQDMVVEGCGCR</sequence>
<comment type="function">
    <text evidence="2 15 17">Growth factor of the TGF-beta superfamily that plays essential roles in many developmental processes, including cardiogenesis, neurogenesis, and osteogenesis. Induces cartilage and bone formation. Initiates the canonical BMP signaling cascade by associating with type I receptor BMPR1A and type II receptor BMPR2. Once all three components are bound together in a complex at the cell surface, BMPR2 phosphorylates and activates BMPR1A. In turn, BMPR1A propagates signal by phosphorylating SMAD1/5/8 that travel to the nucleus and act as activators and repressors of transcription of target genes. Also acts to promote expression of HAMP, via the interaction with its receptor BMPR1A/ALK3 (PubMed:31800957). Can also signal through non-canonical pathways such as ERK/MAP kinase signaling cascade that regulates osteoblast differentiation. Also stimulates the differentiation of myoblasts into osteoblasts via the EIF2AK3-EIF2A-ATF4 pathway by stimulating EIF2A phosphorylation which leads to increased expression of ATF4 which plays a central role in osteoblast differentiation. Acts as a positive regulator of odontoblast differentiation during mesenchymal tooth germ formation, expression is repressed during the bell stage by MSX1-mediated inhibition of CTNNB1 signaling (PubMed:29148101).</text>
</comment>
<comment type="subunit">
    <text evidence="2 6 7 8 9 10 11 12 13 17">Homodimer; disulfide-linked. Interacts with SOSTDC1 (By similarity). Interacts with GREM2, RGMA, RGMB and RGMC. Interacts with ASPN (By similarity). Interacts with MAFP5 (By similarity). Interacts with FBN1 (via N-terminal domain) and FBN2. Interacts with type I receptor BMPR1A. Interacts with type II receptor BMPR2 (By similarity). Interacts with SCUBE3 (By similarity). Interacts with TNFAIP6 (primarily via Link domain); this interaction is inhibited by hyaluronan. Interacts with ERFE (PubMed:31800957). Interacts with BMPR1A/ALK3; the interaction may induce HAMP expression (PubMed:31800957). Forms heterodimers with BMP6 in vitro; the heterodimer then binds to its receptor BMPR1A /ALK3 and may induce HAMP expression (PubMed:31800957). Interacts with TGFBR3 (By similarity).</text>
</comment>
<comment type="subcellular location">
    <subcellularLocation>
        <location>Secreted</location>
    </subcellularLocation>
</comment>
<comment type="developmental stage">
    <text evidence="14 15">Expressed in early bell stage dental mesenchymal cells at 15.5 dpc (at protein level) (PubMed:24028588). Expressed in bell stage dental mesenchymal cells at 17.5 dpc (at protein level) (PubMed:29148101).</text>
</comment>
<comment type="disruption phenotype">
    <text evidence="16">Heterozygous BMP2-knockout mice show abnormal numbers of rib pairs, a reduction in overall body length, and less bone mineral content and volume than wild-type mice. Homozygous BMP2-knockout mice die before embryonic day 12.5.</text>
</comment>
<comment type="similarity">
    <text evidence="18">Belongs to the TGF-beta family.</text>
</comment>
<reference key="1">
    <citation type="journal article" date="1994" name="Biochim. Biophys. Acta">
        <title>Structure and sequence of mouse bone morphogenetic protein-2 gene (BMP-2): comparison of the structures and promoter regions of BMP-2 and BMP-4 genes.</title>
        <authorList>
            <person name="Feng J.Q."/>
            <person name="Harris M.A."/>
            <person name="Ghosh-Choudhury N."/>
            <person name="Feng M."/>
            <person name="Mundy G.R."/>
            <person name="Harris S.E."/>
        </authorList>
    </citation>
    <scope>NUCLEOTIDE SEQUENCE [GENOMIC DNA]</scope>
</reference>
<reference key="2">
    <citation type="journal article" date="2005" name="Science">
        <title>The transcriptional landscape of the mammalian genome.</title>
        <authorList>
            <person name="Carninci P."/>
            <person name="Kasukawa T."/>
            <person name="Katayama S."/>
            <person name="Gough J."/>
            <person name="Frith M.C."/>
            <person name="Maeda N."/>
            <person name="Oyama R."/>
            <person name="Ravasi T."/>
            <person name="Lenhard B."/>
            <person name="Wells C."/>
            <person name="Kodzius R."/>
            <person name="Shimokawa K."/>
            <person name="Bajic V.B."/>
            <person name="Brenner S.E."/>
            <person name="Batalov S."/>
            <person name="Forrest A.R."/>
            <person name="Zavolan M."/>
            <person name="Davis M.J."/>
            <person name="Wilming L.G."/>
            <person name="Aidinis V."/>
            <person name="Allen J.E."/>
            <person name="Ambesi-Impiombato A."/>
            <person name="Apweiler R."/>
            <person name="Aturaliya R.N."/>
            <person name="Bailey T.L."/>
            <person name="Bansal M."/>
            <person name="Baxter L."/>
            <person name="Beisel K.W."/>
            <person name="Bersano T."/>
            <person name="Bono H."/>
            <person name="Chalk A.M."/>
            <person name="Chiu K.P."/>
            <person name="Choudhary V."/>
            <person name="Christoffels A."/>
            <person name="Clutterbuck D.R."/>
            <person name="Crowe M.L."/>
            <person name="Dalla E."/>
            <person name="Dalrymple B.P."/>
            <person name="de Bono B."/>
            <person name="Della Gatta G."/>
            <person name="di Bernardo D."/>
            <person name="Down T."/>
            <person name="Engstrom P."/>
            <person name="Fagiolini M."/>
            <person name="Faulkner G."/>
            <person name="Fletcher C.F."/>
            <person name="Fukushima T."/>
            <person name="Furuno M."/>
            <person name="Futaki S."/>
            <person name="Gariboldi M."/>
            <person name="Georgii-Hemming P."/>
            <person name="Gingeras T.R."/>
            <person name="Gojobori T."/>
            <person name="Green R.E."/>
            <person name="Gustincich S."/>
            <person name="Harbers M."/>
            <person name="Hayashi Y."/>
            <person name="Hensch T.K."/>
            <person name="Hirokawa N."/>
            <person name="Hill D."/>
            <person name="Huminiecki L."/>
            <person name="Iacono M."/>
            <person name="Ikeo K."/>
            <person name="Iwama A."/>
            <person name="Ishikawa T."/>
            <person name="Jakt M."/>
            <person name="Kanapin A."/>
            <person name="Katoh M."/>
            <person name="Kawasawa Y."/>
            <person name="Kelso J."/>
            <person name="Kitamura H."/>
            <person name="Kitano H."/>
            <person name="Kollias G."/>
            <person name="Krishnan S.P."/>
            <person name="Kruger A."/>
            <person name="Kummerfeld S.K."/>
            <person name="Kurochkin I.V."/>
            <person name="Lareau L.F."/>
            <person name="Lazarevic D."/>
            <person name="Lipovich L."/>
            <person name="Liu J."/>
            <person name="Liuni S."/>
            <person name="McWilliam S."/>
            <person name="Madan Babu M."/>
            <person name="Madera M."/>
            <person name="Marchionni L."/>
            <person name="Matsuda H."/>
            <person name="Matsuzawa S."/>
            <person name="Miki H."/>
            <person name="Mignone F."/>
            <person name="Miyake S."/>
            <person name="Morris K."/>
            <person name="Mottagui-Tabar S."/>
            <person name="Mulder N."/>
            <person name="Nakano N."/>
            <person name="Nakauchi H."/>
            <person name="Ng P."/>
            <person name="Nilsson R."/>
            <person name="Nishiguchi S."/>
            <person name="Nishikawa S."/>
            <person name="Nori F."/>
            <person name="Ohara O."/>
            <person name="Okazaki Y."/>
            <person name="Orlando V."/>
            <person name="Pang K.C."/>
            <person name="Pavan W.J."/>
            <person name="Pavesi G."/>
            <person name="Pesole G."/>
            <person name="Petrovsky N."/>
            <person name="Piazza S."/>
            <person name="Reed J."/>
            <person name="Reid J.F."/>
            <person name="Ring B.Z."/>
            <person name="Ringwald M."/>
            <person name="Rost B."/>
            <person name="Ruan Y."/>
            <person name="Salzberg S.L."/>
            <person name="Sandelin A."/>
            <person name="Schneider C."/>
            <person name="Schoenbach C."/>
            <person name="Sekiguchi K."/>
            <person name="Semple C.A."/>
            <person name="Seno S."/>
            <person name="Sessa L."/>
            <person name="Sheng Y."/>
            <person name="Shibata Y."/>
            <person name="Shimada H."/>
            <person name="Shimada K."/>
            <person name="Silva D."/>
            <person name="Sinclair B."/>
            <person name="Sperling S."/>
            <person name="Stupka E."/>
            <person name="Sugiura K."/>
            <person name="Sultana R."/>
            <person name="Takenaka Y."/>
            <person name="Taki K."/>
            <person name="Tammoja K."/>
            <person name="Tan S.L."/>
            <person name="Tang S."/>
            <person name="Taylor M.S."/>
            <person name="Tegner J."/>
            <person name="Teichmann S.A."/>
            <person name="Ueda H.R."/>
            <person name="van Nimwegen E."/>
            <person name="Verardo R."/>
            <person name="Wei C.L."/>
            <person name="Yagi K."/>
            <person name="Yamanishi H."/>
            <person name="Zabarovsky E."/>
            <person name="Zhu S."/>
            <person name="Zimmer A."/>
            <person name="Hide W."/>
            <person name="Bult C."/>
            <person name="Grimmond S.M."/>
            <person name="Teasdale R.D."/>
            <person name="Liu E.T."/>
            <person name="Brusic V."/>
            <person name="Quackenbush J."/>
            <person name="Wahlestedt C."/>
            <person name="Mattick J.S."/>
            <person name="Hume D.A."/>
            <person name="Kai C."/>
            <person name="Sasaki D."/>
            <person name="Tomaru Y."/>
            <person name="Fukuda S."/>
            <person name="Kanamori-Katayama M."/>
            <person name="Suzuki M."/>
            <person name="Aoki J."/>
            <person name="Arakawa T."/>
            <person name="Iida J."/>
            <person name="Imamura K."/>
            <person name="Itoh M."/>
            <person name="Kato T."/>
            <person name="Kawaji H."/>
            <person name="Kawagashira N."/>
            <person name="Kawashima T."/>
            <person name="Kojima M."/>
            <person name="Kondo S."/>
            <person name="Konno H."/>
            <person name="Nakano K."/>
            <person name="Ninomiya N."/>
            <person name="Nishio T."/>
            <person name="Okada M."/>
            <person name="Plessy C."/>
            <person name="Shibata K."/>
            <person name="Shiraki T."/>
            <person name="Suzuki S."/>
            <person name="Tagami M."/>
            <person name="Waki K."/>
            <person name="Watahiki A."/>
            <person name="Okamura-Oho Y."/>
            <person name="Suzuki H."/>
            <person name="Kawai J."/>
            <person name="Hayashizaki Y."/>
        </authorList>
    </citation>
    <scope>NUCLEOTIDE SEQUENCE [LARGE SCALE MRNA]</scope>
    <source>
        <strain>C57BL/6J</strain>
        <tissue>Embryo</tissue>
        <tissue>Medulla oblongata</tissue>
    </source>
</reference>
<reference key="3">
    <citation type="journal article" date="2009" name="PLoS Biol.">
        <title>Lineage-specific biology revealed by a finished genome assembly of the mouse.</title>
        <authorList>
            <person name="Church D.M."/>
            <person name="Goodstadt L."/>
            <person name="Hillier L.W."/>
            <person name="Zody M.C."/>
            <person name="Goldstein S."/>
            <person name="She X."/>
            <person name="Bult C.J."/>
            <person name="Agarwala R."/>
            <person name="Cherry J.L."/>
            <person name="DiCuccio M."/>
            <person name="Hlavina W."/>
            <person name="Kapustin Y."/>
            <person name="Meric P."/>
            <person name="Maglott D."/>
            <person name="Birtle Z."/>
            <person name="Marques A.C."/>
            <person name="Graves T."/>
            <person name="Zhou S."/>
            <person name="Teague B."/>
            <person name="Potamousis K."/>
            <person name="Churas C."/>
            <person name="Place M."/>
            <person name="Herschleb J."/>
            <person name="Runnheim R."/>
            <person name="Forrest D."/>
            <person name="Amos-Landgraf J."/>
            <person name="Schwartz D.C."/>
            <person name="Cheng Z."/>
            <person name="Lindblad-Toh K."/>
            <person name="Eichler E.E."/>
            <person name="Ponting C.P."/>
        </authorList>
    </citation>
    <scope>NUCLEOTIDE SEQUENCE [LARGE SCALE GENOMIC DNA]</scope>
    <source>
        <strain>C57BL/6J</strain>
    </source>
</reference>
<reference key="4">
    <citation type="submission" date="2005-07" db="EMBL/GenBank/DDBJ databases">
        <authorList>
            <person name="Mural R.J."/>
            <person name="Adams M.D."/>
            <person name="Myers E.W."/>
            <person name="Smith H.O."/>
            <person name="Venter J.C."/>
        </authorList>
    </citation>
    <scope>NUCLEOTIDE SEQUENCE [LARGE SCALE GENOMIC DNA]</scope>
</reference>
<reference key="5">
    <citation type="journal article" date="2004" name="Genome Res.">
        <title>The status, quality, and expansion of the NIH full-length cDNA project: the Mammalian Gene Collection (MGC).</title>
        <authorList>
            <consortium name="The MGC Project Team"/>
        </authorList>
    </citation>
    <scope>NUCLEOTIDE SEQUENCE [LARGE SCALE MRNA]</scope>
    <source>
        <tissue>Thyroid</tissue>
    </source>
</reference>
<reference key="6">
    <citation type="journal article" date="1990" name="Genomics">
        <title>Chromosomal localization of seven members of the murine TGF-beta superfamily suggests close linkage to several morphogenetic mutant loci.</title>
        <authorList>
            <person name="Dickinson M.E."/>
            <person name="Kobrin M.S."/>
            <person name="Silan C.M."/>
            <person name="Kingsley D.M."/>
            <person name="Justice M.J."/>
            <person name="Miller D.A."/>
            <person name="Ceci J.D."/>
            <person name="Lock L.F."/>
            <person name="Lee A."/>
            <person name="Buchberg A.M."/>
            <person name="Siracusa L.D."/>
            <person name="Lyons K.M."/>
            <person name="Derynck R."/>
            <person name="Hogan B.L.M."/>
            <person name="Copeland N.G."/>
            <person name="Jenkins N.A."/>
        </authorList>
    </citation>
    <scope>NUCLEOTIDE SEQUENCE [GENOMIC DNA] OF 1-351</scope>
</reference>
<reference key="7">
    <citation type="journal article" date="2003" name="Dev. Biol.">
        <title>Identification of a secreted BMP antagonist, ectodin, integrating BMP, FGF, and SHH signals from the tooth enamel knot.</title>
        <authorList>
            <person name="Laurikkala J."/>
            <person name="Kassai Y."/>
            <person name="Pakkasjaervi L."/>
            <person name="Thesleff I."/>
            <person name="Itoh N."/>
        </authorList>
    </citation>
    <scope>INTERACTION WITH SOSTDC1</scope>
</reference>
<reference key="8">
    <citation type="journal article" date="2004" name="J. Biol. Chem.">
        <title>Protein related to DAN and cerberus is a bone morphogenetic protein antagonist that participates in ovarian paracrine regulation.</title>
        <authorList>
            <person name="Sudo S."/>
            <person name="Avsian-Kretchmer O."/>
            <person name="Wang L.S."/>
            <person name="Hsueh A.J."/>
        </authorList>
    </citation>
    <scope>INTERACTION WITH GREM2</scope>
</reference>
<reference key="9">
    <citation type="journal article" date="2005" name="J. Biol. Chem.">
        <title>DRAGON, a bone morphogenetic protein co-receptor.</title>
        <authorList>
            <person name="Samad T.A."/>
            <person name="Rebbapragada A."/>
            <person name="Bell E."/>
            <person name="Zhang Y."/>
            <person name="Sidis Y."/>
            <person name="Jeong S.-J."/>
            <person name="Campagna J.A."/>
            <person name="Perusini S."/>
            <person name="Fabrizio D.A."/>
            <person name="Schneyer A.L."/>
            <person name="Lin H.Y."/>
            <person name="Brivanlou A.H."/>
            <person name="Attisano L."/>
            <person name="Woolf C.J."/>
        </authorList>
    </citation>
    <scope>INTERACTION WITH RGMB</scope>
</reference>
<reference key="10">
    <citation type="journal article" date="2005" name="J. Biol. Chem.">
        <title>Repulsive guidance molecule (RGMa), a DRAGON homologue, is a bone morphogenetic protein co-receptor.</title>
        <authorList>
            <person name="Babitt J.L."/>
            <person name="Zhang Y."/>
            <person name="Samad T.A."/>
            <person name="Xia Y."/>
            <person name="Tang J."/>
            <person name="Campagna J.A."/>
            <person name="Schneyer A.L."/>
            <person name="Woolf C.J."/>
            <person name="Lin H.Y."/>
        </authorList>
    </citation>
    <scope>INTERACTION WITH RGMA</scope>
</reference>
<reference key="11">
    <citation type="journal article" date="2006" name="Nat. Genet.">
        <title>Bone morphogenetic protein signaling by hemojuvelin regulates hepcidin expression.</title>
        <authorList>
            <person name="Babitt J.L."/>
            <person name="Huang F.W."/>
            <person name="Wrighting D.M."/>
            <person name="Xia Y."/>
            <person name="Sidis Y."/>
            <person name="Samad T.A."/>
            <person name="Campagna J.A."/>
            <person name="Chung R.T."/>
            <person name="Schneyer A.L."/>
            <person name="Woolf C.J."/>
            <person name="Andrews N.C."/>
            <person name="Lin H.Y."/>
        </authorList>
    </citation>
    <scope>INTERACTION WITH RGMC</scope>
</reference>
<reference key="12">
    <citation type="journal article" date="2007" name="J. Biol. Chem.">
        <title>Repulsive guidance molecule RGMa alters utilization of bone morphogenetic protein (BMP) type II receptors by BMP2 and BMP4.</title>
        <authorList>
            <person name="Xia Y."/>
            <person name="Yu P.B."/>
            <person name="Sidis Y."/>
            <person name="Beppu H."/>
            <person name="Bloch K.D."/>
            <person name="Schneyer A.L."/>
            <person name="Lin H.Y."/>
        </authorList>
    </citation>
    <scope>INTERACTION WITH RGMA</scope>
</reference>
<reference key="13">
    <citation type="journal article" date="2007" name="J. Biol. Chem.">
        <title>PLAP-1/asporin, a novel negative regulator of periodontal ligament mineralization.</title>
        <authorList>
            <person name="Yamada S."/>
            <person name="Tomoeda M."/>
            <person name="Ozawa Y."/>
            <person name="Yoneda S."/>
            <person name="Terashima Y."/>
            <person name="Ikezawa K."/>
            <person name="Ikegawa S."/>
            <person name="Saito M."/>
            <person name="Toyosawa S."/>
            <person name="Murakami S."/>
        </authorList>
    </citation>
    <scope>INTERACTION WITH ASPN</scope>
</reference>
<reference key="14">
    <citation type="journal article" date="2013" name="Eur. J. Oral Sci.">
        <title>Msx1 regulates proliferation and differentiation of mouse dental mesenchymal cells in culture.</title>
        <authorList>
            <person name="Feng X.Y."/>
            <person name="Zhao Y.M."/>
            <person name="Wang W.J."/>
            <person name="Ge L.H."/>
        </authorList>
    </citation>
    <scope>DEVELOPMENTAL STAGE</scope>
</reference>
<reference key="15">
    <citation type="journal article" date="2013" name="J. Biol. Chem.">
        <title>Microfibril-associated glycoprotein 2 (MAGP2) loss of function has pleiotropic effects in vivo.</title>
        <authorList>
            <person name="Combs M.D."/>
            <person name="Knutsen R.H."/>
            <person name="Broekelmann T.J."/>
            <person name="Toennies H.M."/>
            <person name="Brett T.J."/>
            <person name="Miller C.A."/>
            <person name="Kober D.L."/>
            <person name="Craft C.S."/>
            <person name="Atkinson J.J."/>
            <person name="Shipley J.M."/>
            <person name="Trask B.C."/>
            <person name="Mecham R.P."/>
        </authorList>
    </citation>
    <scope>INTERACTION WITH MFAP5</scope>
</reference>
<reference key="16">
    <citation type="journal article" date="2017" name="Am. J. Hum. Genet.">
        <title>Monoallelic BMP2 variants predicted to result in haploinsufficiency cause craniofacial, skeletal, and cardiac features overlapping those of 20p12 deletions.</title>
        <authorList>
            <person name="Tan T.Y."/>
            <person name="Gonzaga-Jauregui C."/>
            <person name="Bhoj E.J."/>
            <person name="Strauss K.A."/>
            <person name="Brigatti K."/>
            <person name="Puffenberger E."/>
            <person name="Li D."/>
            <person name="Xie L."/>
            <person name="Das N."/>
            <person name="Skubas I."/>
            <person name="Deckelbaum R.A."/>
            <person name="Hughes V."/>
            <person name="Brydges S."/>
            <person name="Hatsell S."/>
            <person name="Siao C.J."/>
            <person name="Dominguez M.G."/>
            <person name="Economides A."/>
            <person name="Overton J.D."/>
            <person name="Mayne V."/>
            <person name="Simm P.J."/>
            <person name="Jones B.O."/>
            <person name="Eggers S."/>
            <person name="Le Guyader G."/>
            <person name="Pelluard F."/>
            <person name="Haack T.B."/>
            <person name="Sturm M."/>
            <person name="Riess A."/>
            <person name="Waldmueller S."/>
            <person name="Hofbeck M."/>
            <person name="Steindl K."/>
            <person name="Joset P."/>
            <person name="Rauch A."/>
            <person name="Hakonarson H."/>
            <person name="Baker N.L."/>
            <person name="Farlie P.G."/>
        </authorList>
    </citation>
    <scope>DISRUPTION PHENOTYPE</scope>
</reference>
<reference key="17">
    <citation type="journal article" date="2018" name="Eur. J. Oral Sci.">
        <title>Homeobox protein MSX-1 inhibits expression of bone morphogenetic protein 2, bone morphogenetic protein 4, and lymphoid enhancer-binding factor 1 via Wnt/beta-catenin signaling to prevent differentiation of dental mesenchymal cells during the late bell stage.</title>
        <authorList>
            <person name="Feng X.Y."/>
            <person name="Wu X.S."/>
            <person name="Wang J.S."/>
            <person name="Zhang C.M."/>
            <person name="Wang S.L."/>
        </authorList>
    </citation>
    <scope>FUNCTION</scope>
    <scope>DEVELOPMENTAL STAGE</scope>
</reference>
<reference key="18">
    <citation type="journal article" date="2020" name="Blood">
        <title>Erythroferrone lowers hepcidin by sequestering BMP2/6 heterodimer from binding to the BMP type I receptor ALK3.</title>
        <authorList>
            <person name="Wang C.Y."/>
            <person name="Xu Y."/>
            <person name="Traeger L."/>
            <person name="Dogan D.Y."/>
            <person name="Xiao X."/>
            <person name="Steinbicker A.U."/>
            <person name="Babitt J.L."/>
        </authorList>
    </citation>
    <scope>FUNCTION</scope>
    <scope>INTERACTION WITH ERFE; BMPR1A AND HUMAN BMP6</scope>
</reference>